<evidence type="ECO:0000250" key="1"/>
<evidence type="ECO:0000256" key="2">
    <source>
        <dbReference type="SAM" id="MobiDB-lite"/>
    </source>
</evidence>
<evidence type="ECO:0000305" key="3"/>
<sequence length="697" mass="77381">MSIPFGLDFGNNSSVLAVARNRGIDIVVNEVSNRSTPSLVGFGQKNRFLGEAGKNKQTSNIKNTVDNLKRIVGLDHAHSDFEEEAKFFSSKLVKMEDGKIGAQVRFAGEQQVFSATQIAAMFMNRAKTIVQDETKGKVTDVALAVPAWYNEAQRYAAADAARIAGLNPVRVVNDVTAAAVSYGVFKTDLPEGEEKPRRVAFVDIGHSSYTCSIGSFKKGELKILGTAYDKHFGGRNFDRAITEHFAEEFKGKYKIDIRENAKAYNRVMTAAEKLKKVLSANTAAPFNIESVMNDVDVSSQLTREELEELVAPLLKRVTEPVTKALAQAKLTPEDIDFVEIIGGTTRIPCLKNAISAAFNKPLSTTLNQDEAIAKGAAFICAIHSPTLKVRPFKFEDIHEYSVSYHWDQQVEDEDHLEVFPAGSSYPSTKLITLHRTGDFTMTAKYTNPEVLPAGMPEEIAKWEITGVKVPEGETSVPVKLKLRCDPSGFHIIENAYTVEDIKVKEQIPPAADAPEDAEPEYKEVTKTVKKDTLQIVAHTFALEEAVLNELIEKENELAAQDKLVAETEDRKNTLEEYVYTLRGKLDEEYAAFASDEEKTKLKDMLAKAEEWLYDEGYDSTKAKYIAKYEELASLGNVIRGRYMAKEEEKRQALRAKQEAAQMAEMAEKLAAQRAAEQKAQESKAESDKDAEGDIDLD</sequence>
<name>HSP7F_EREGS</name>
<reference key="1">
    <citation type="journal article" date="2004" name="Science">
        <title>The Ashbya gossypii genome as a tool for mapping the ancient Saccharomyces cerevisiae genome.</title>
        <authorList>
            <person name="Dietrich F.S."/>
            <person name="Voegeli S."/>
            <person name="Brachat S."/>
            <person name="Lerch A."/>
            <person name="Gates K."/>
            <person name="Steiner S."/>
            <person name="Mohr C."/>
            <person name="Poehlmann R."/>
            <person name="Luedi P."/>
            <person name="Choi S."/>
            <person name="Wing R.A."/>
            <person name="Flavier A."/>
            <person name="Gaffney T.D."/>
            <person name="Philippsen P."/>
        </authorList>
    </citation>
    <scope>NUCLEOTIDE SEQUENCE [LARGE SCALE GENOMIC DNA]</scope>
    <source>
        <strain>ATCC 10895 / CBS 109.51 / FGSC 9923 / NRRL Y-1056</strain>
    </source>
</reference>
<reference key="2">
    <citation type="journal article" date="2013" name="G3 (Bethesda)">
        <title>Genomes of Ashbya fungi isolated from insects reveal four mating-type loci, numerous translocations, lack of transposons, and distinct gene duplications.</title>
        <authorList>
            <person name="Dietrich F.S."/>
            <person name="Voegeli S."/>
            <person name="Kuo S."/>
            <person name="Philippsen P."/>
        </authorList>
    </citation>
    <scope>GENOME REANNOTATION</scope>
    <source>
        <strain>ATCC 10895 / CBS 109.51 / FGSC 9923 / NRRL Y-1056</strain>
    </source>
</reference>
<organism>
    <name type="scientific">Eremothecium gossypii (strain ATCC 10895 / CBS 109.51 / FGSC 9923 / NRRL Y-1056)</name>
    <name type="common">Yeast</name>
    <name type="synonym">Ashbya gossypii</name>
    <dbReference type="NCBI Taxonomy" id="284811"/>
    <lineage>
        <taxon>Eukaryota</taxon>
        <taxon>Fungi</taxon>
        <taxon>Dikarya</taxon>
        <taxon>Ascomycota</taxon>
        <taxon>Saccharomycotina</taxon>
        <taxon>Saccharomycetes</taxon>
        <taxon>Saccharomycetales</taxon>
        <taxon>Saccharomycetaceae</taxon>
        <taxon>Eremothecium</taxon>
    </lineage>
</organism>
<gene>
    <name type="primary">SSE1</name>
    <name type="ordered locus">AGR212W</name>
</gene>
<keyword id="KW-0067">ATP-binding</keyword>
<keyword id="KW-0143">Chaperone</keyword>
<keyword id="KW-0963">Cytoplasm</keyword>
<keyword id="KW-0547">Nucleotide-binding</keyword>
<keyword id="KW-1185">Reference proteome</keyword>
<keyword id="KW-0346">Stress response</keyword>
<protein>
    <recommendedName>
        <fullName>Heat shock protein homolog SSE1</fullName>
    </recommendedName>
</protein>
<comment type="subcellular location">
    <subcellularLocation>
        <location evidence="1">Cytoplasm</location>
    </subcellularLocation>
</comment>
<comment type="similarity">
    <text evidence="3">Belongs to the heat shock protein 70 family.</text>
</comment>
<feature type="chain" id="PRO_0000078391" description="Heat shock protein homolog SSE1">
    <location>
        <begin position="1"/>
        <end position="697"/>
    </location>
</feature>
<feature type="region of interest" description="Disordered" evidence="2">
    <location>
        <begin position="664"/>
        <end position="697"/>
    </location>
</feature>
<feature type="compositionally biased region" description="Low complexity" evidence="2">
    <location>
        <begin position="664"/>
        <end position="674"/>
    </location>
</feature>
<feature type="compositionally biased region" description="Basic and acidic residues" evidence="2">
    <location>
        <begin position="675"/>
        <end position="691"/>
    </location>
</feature>
<proteinExistence type="inferred from homology"/>
<dbReference type="EMBL" id="AE016820">
    <property type="protein sequence ID" value="AAS54702.1"/>
    <property type="molecule type" value="Genomic_DNA"/>
</dbReference>
<dbReference type="RefSeq" id="NP_986878.1">
    <property type="nucleotide sequence ID" value="NM_211940.1"/>
</dbReference>
<dbReference type="SMR" id="Q74ZJ0"/>
<dbReference type="FunCoup" id="Q74ZJ0">
    <property type="interactions" value="1331"/>
</dbReference>
<dbReference type="STRING" id="284811.Q74ZJ0"/>
<dbReference type="EnsemblFungi" id="AAS54702">
    <property type="protein sequence ID" value="AAS54702"/>
    <property type="gene ID" value="AGOS_AGR212W"/>
</dbReference>
<dbReference type="GeneID" id="4623180"/>
<dbReference type="KEGG" id="ago:AGOS_AGR212W"/>
<dbReference type="eggNOG" id="KOG0103">
    <property type="taxonomic scope" value="Eukaryota"/>
</dbReference>
<dbReference type="HOGENOM" id="CLU_005965_5_1_1"/>
<dbReference type="InParanoid" id="Q74ZJ0"/>
<dbReference type="OMA" id="WEQSPEI"/>
<dbReference type="OrthoDB" id="434160at2759"/>
<dbReference type="Proteomes" id="UP000000591">
    <property type="component" value="Chromosome VII"/>
</dbReference>
<dbReference type="GO" id="GO:0005829">
    <property type="term" value="C:cytosol"/>
    <property type="evidence" value="ECO:0000318"/>
    <property type="project" value="GO_Central"/>
</dbReference>
<dbReference type="GO" id="GO:0005634">
    <property type="term" value="C:nucleus"/>
    <property type="evidence" value="ECO:0000318"/>
    <property type="project" value="GO_Central"/>
</dbReference>
<dbReference type="GO" id="GO:0000774">
    <property type="term" value="F:adenyl-nucleotide exchange factor activity"/>
    <property type="evidence" value="ECO:0000318"/>
    <property type="project" value="GO_Central"/>
</dbReference>
<dbReference type="GO" id="GO:0005524">
    <property type="term" value="F:ATP binding"/>
    <property type="evidence" value="ECO:0007669"/>
    <property type="project" value="UniProtKB-KW"/>
</dbReference>
<dbReference type="GO" id="GO:0140662">
    <property type="term" value="F:ATP-dependent protein folding chaperone"/>
    <property type="evidence" value="ECO:0007669"/>
    <property type="project" value="InterPro"/>
</dbReference>
<dbReference type="GO" id="GO:0042277">
    <property type="term" value="F:peptide binding"/>
    <property type="evidence" value="ECO:0007669"/>
    <property type="project" value="EnsemblFungi"/>
</dbReference>
<dbReference type="GO" id="GO:0006914">
    <property type="term" value="P:autophagy"/>
    <property type="evidence" value="ECO:0007669"/>
    <property type="project" value="EnsemblFungi"/>
</dbReference>
<dbReference type="GO" id="GO:0010499">
    <property type="term" value="P:proteasomal ubiquitin-independent protein catabolic process"/>
    <property type="evidence" value="ECO:0007669"/>
    <property type="project" value="EnsemblFungi"/>
</dbReference>
<dbReference type="GO" id="GO:0043161">
    <property type="term" value="P:proteasome-mediated ubiquitin-dependent protein catabolic process"/>
    <property type="evidence" value="ECO:0007669"/>
    <property type="project" value="EnsemblFungi"/>
</dbReference>
<dbReference type="GO" id="GO:0006457">
    <property type="term" value="P:protein folding"/>
    <property type="evidence" value="ECO:0000318"/>
    <property type="project" value="GO_Central"/>
</dbReference>
<dbReference type="GO" id="GO:0042026">
    <property type="term" value="P:protein refolding"/>
    <property type="evidence" value="ECO:0007669"/>
    <property type="project" value="EnsemblFungi"/>
</dbReference>
<dbReference type="FunFam" id="1.20.1270.10:FF:000002">
    <property type="entry name" value="Heat shock 70 kDa protein 4"/>
    <property type="match status" value="1"/>
</dbReference>
<dbReference type="FunFam" id="3.30.30.30:FF:000002">
    <property type="entry name" value="Heat shock 70 kDa protein 4"/>
    <property type="match status" value="1"/>
</dbReference>
<dbReference type="FunFam" id="3.30.420.40:FF:000171">
    <property type="entry name" value="Heat shock 70 kDa protein 4"/>
    <property type="match status" value="2"/>
</dbReference>
<dbReference type="FunFam" id="3.90.640.10:FF:000004">
    <property type="entry name" value="Heat shock 70 kDa protein 4"/>
    <property type="match status" value="1"/>
</dbReference>
<dbReference type="FunFam" id="2.60.34.10:FF:000020">
    <property type="entry name" value="Heat shock SSE1"/>
    <property type="match status" value="1"/>
</dbReference>
<dbReference type="Gene3D" id="1.20.1270.10">
    <property type="match status" value="1"/>
</dbReference>
<dbReference type="Gene3D" id="3.30.30.30">
    <property type="match status" value="1"/>
</dbReference>
<dbReference type="Gene3D" id="3.30.420.40">
    <property type="match status" value="2"/>
</dbReference>
<dbReference type="Gene3D" id="3.90.640.10">
    <property type="entry name" value="Actin, Chain A, domain 4"/>
    <property type="match status" value="1"/>
</dbReference>
<dbReference type="Gene3D" id="2.60.34.10">
    <property type="entry name" value="Substrate Binding Domain Of DNAk, Chain A, domain 1"/>
    <property type="match status" value="1"/>
</dbReference>
<dbReference type="InterPro" id="IPR043129">
    <property type="entry name" value="ATPase_NBD"/>
</dbReference>
<dbReference type="InterPro" id="IPR029048">
    <property type="entry name" value="HSP70_C_sf"/>
</dbReference>
<dbReference type="InterPro" id="IPR029047">
    <property type="entry name" value="HSP70_peptide-bd_sf"/>
</dbReference>
<dbReference type="InterPro" id="IPR013126">
    <property type="entry name" value="Hsp_70_fam"/>
</dbReference>
<dbReference type="PANTHER" id="PTHR45639:SF4">
    <property type="entry name" value="HSC70CB, ISOFORM G"/>
    <property type="match status" value="1"/>
</dbReference>
<dbReference type="PANTHER" id="PTHR45639">
    <property type="entry name" value="HSC70CB, ISOFORM G-RELATED"/>
    <property type="match status" value="1"/>
</dbReference>
<dbReference type="Pfam" id="PF00012">
    <property type="entry name" value="HSP70"/>
    <property type="match status" value="1"/>
</dbReference>
<dbReference type="PRINTS" id="PR00301">
    <property type="entry name" value="HEATSHOCK70"/>
</dbReference>
<dbReference type="SUPFAM" id="SSF53067">
    <property type="entry name" value="Actin-like ATPase domain"/>
    <property type="match status" value="2"/>
</dbReference>
<dbReference type="SUPFAM" id="SSF100934">
    <property type="entry name" value="Heat shock protein 70kD (HSP70), C-terminal subdomain"/>
    <property type="match status" value="1"/>
</dbReference>
<dbReference type="SUPFAM" id="SSF100920">
    <property type="entry name" value="Heat shock protein 70kD (HSP70), peptide-binding domain"/>
    <property type="match status" value="1"/>
</dbReference>
<accession>Q74ZJ0</accession>